<name>PSIO_DICDI</name>
<reference key="1">
    <citation type="journal article" date="2005" name="Nature">
        <title>The genome of the social amoeba Dictyostelium discoideum.</title>
        <authorList>
            <person name="Eichinger L."/>
            <person name="Pachebat J.A."/>
            <person name="Gloeckner G."/>
            <person name="Rajandream M.A."/>
            <person name="Sucgang R."/>
            <person name="Berriman M."/>
            <person name="Song J."/>
            <person name="Olsen R."/>
            <person name="Szafranski K."/>
            <person name="Xu Q."/>
            <person name="Tunggal B."/>
            <person name="Kummerfeld S."/>
            <person name="Madera M."/>
            <person name="Konfortov B.A."/>
            <person name="Rivero F."/>
            <person name="Bankier A.T."/>
            <person name="Lehmann R."/>
            <person name="Hamlin N."/>
            <person name="Davies R."/>
            <person name="Gaudet P."/>
            <person name="Fey P."/>
            <person name="Pilcher K."/>
            <person name="Chen G."/>
            <person name="Saunders D."/>
            <person name="Sodergren E.J."/>
            <person name="Davis P."/>
            <person name="Kerhornou A."/>
            <person name="Nie X."/>
            <person name="Hall N."/>
            <person name="Anjard C."/>
            <person name="Hemphill L."/>
            <person name="Bason N."/>
            <person name="Farbrother P."/>
            <person name="Desany B."/>
            <person name="Just E."/>
            <person name="Morio T."/>
            <person name="Rost R."/>
            <person name="Churcher C.M."/>
            <person name="Cooper J."/>
            <person name="Haydock S."/>
            <person name="van Driessche N."/>
            <person name="Cronin A."/>
            <person name="Goodhead I."/>
            <person name="Muzny D.M."/>
            <person name="Mourier T."/>
            <person name="Pain A."/>
            <person name="Lu M."/>
            <person name="Harper D."/>
            <person name="Lindsay R."/>
            <person name="Hauser H."/>
            <person name="James K.D."/>
            <person name="Quiles M."/>
            <person name="Madan Babu M."/>
            <person name="Saito T."/>
            <person name="Buchrieser C."/>
            <person name="Wardroper A."/>
            <person name="Felder M."/>
            <person name="Thangavelu M."/>
            <person name="Johnson D."/>
            <person name="Knights A."/>
            <person name="Loulseged H."/>
            <person name="Mungall K.L."/>
            <person name="Oliver K."/>
            <person name="Price C."/>
            <person name="Quail M.A."/>
            <person name="Urushihara H."/>
            <person name="Hernandez J."/>
            <person name="Rabbinowitsch E."/>
            <person name="Steffen D."/>
            <person name="Sanders M."/>
            <person name="Ma J."/>
            <person name="Kohara Y."/>
            <person name="Sharp S."/>
            <person name="Simmonds M.N."/>
            <person name="Spiegler S."/>
            <person name="Tivey A."/>
            <person name="Sugano S."/>
            <person name="White B."/>
            <person name="Walker D."/>
            <person name="Woodward J.R."/>
            <person name="Winckler T."/>
            <person name="Tanaka Y."/>
            <person name="Shaulsky G."/>
            <person name="Schleicher M."/>
            <person name="Weinstock G.M."/>
            <person name="Rosenthal A."/>
            <person name="Cox E.C."/>
            <person name="Chisholm R.L."/>
            <person name="Gibbs R.A."/>
            <person name="Loomis W.F."/>
            <person name="Platzer M."/>
            <person name="Kay R.R."/>
            <person name="Williams J.G."/>
            <person name="Dear P.H."/>
            <person name="Noegel A.A."/>
            <person name="Barrell B.G."/>
            <person name="Kuspa A."/>
        </authorList>
    </citation>
    <scope>NUCLEOTIDE SEQUENCE [LARGE SCALE GENOMIC DNA]</scope>
    <source>
        <strain>AX4</strain>
    </source>
</reference>
<accession>Q54VS4</accession>
<protein>
    <recommendedName>
        <fullName>Protein psiO</fullName>
    </recommendedName>
</protein>
<dbReference type="EMBL" id="AAFI02000035">
    <property type="protein sequence ID" value="EAL67310.1"/>
    <property type="molecule type" value="Genomic_DNA"/>
</dbReference>
<dbReference type="RefSeq" id="XP_641281.1">
    <property type="nucleotide sequence ID" value="XM_636189.1"/>
</dbReference>
<dbReference type="FunCoup" id="Q54VS4">
    <property type="interactions" value="12"/>
</dbReference>
<dbReference type="GlyCosmos" id="Q54VS4">
    <property type="glycosylation" value="6 sites, No reported glycans"/>
</dbReference>
<dbReference type="GlyGen" id="Q54VS4">
    <property type="glycosylation" value="6 sites"/>
</dbReference>
<dbReference type="PaxDb" id="44689-DDB0232406"/>
<dbReference type="EnsemblProtists" id="EAL67310">
    <property type="protein sequence ID" value="EAL67310"/>
    <property type="gene ID" value="DDB_G0280167"/>
</dbReference>
<dbReference type="GeneID" id="8622413"/>
<dbReference type="KEGG" id="ddi:DDB_G0280167"/>
<dbReference type="dictyBase" id="DDB_G0280167">
    <property type="gene designation" value="psiO"/>
</dbReference>
<dbReference type="VEuPathDB" id="AmoebaDB:DDB_G0280167"/>
<dbReference type="eggNOG" id="ENOG502REBK">
    <property type="taxonomic scope" value="Eukaryota"/>
</dbReference>
<dbReference type="HOGENOM" id="CLU_024170_0_0_1"/>
<dbReference type="InParanoid" id="Q54VS4"/>
<dbReference type="OMA" id="DRICEDG"/>
<dbReference type="PhylomeDB" id="Q54VS4"/>
<dbReference type="PRO" id="PR:Q54VS4"/>
<dbReference type="Proteomes" id="UP000002195">
    <property type="component" value="Chromosome 3"/>
</dbReference>
<dbReference type="GO" id="GO:0005576">
    <property type="term" value="C:extracellular region"/>
    <property type="evidence" value="ECO:0000318"/>
    <property type="project" value="GO_Central"/>
</dbReference>
<dbReference type="GO" id="GO:0016020">
    <property type="term" value="C:membrane"/>
    <property type="evidence" value="ECO:0007669"/>
    <property type="project" value="UniProtKB-SubCell"/>
</dbReference>
<dbReference type="InterPro" id="IPR011874">
    <property type="entry name" value="Fibro_Slime"/>
</dbReference>
<dbReference type="InterPro" id="IPR037524">
    <property type="entry name" value="PA14/GLEYA"/>
</dbReference>
<dbReference type="InterPro" id="IPR011658">
    <property type="entry name" value="PA14_dom"/>
</dbReference>
<dbReference type="InterPro" id="IPR051154">
    <property type="entry name" value="Prespore-cell_inducing_factor"/>
</dbReference>
<dbReference type="NCBIfam" id="TIGR02148">
    <property type="entry name" value="Fibro_Slime"/>
    <property type="match status" value="1"/>
</dbReference>
<dbReference type="PANTHER" id="PTHR31137:SF29">
    <property type="entry name" value="PROTEIN PSIA-RELATED"/>
    <property type="match status" value="1"/>
</dbReference>
<dbReference type="PANTHER" id="PTHR31137">
    <property type="entry name" value="PROTEIN PSIB-RELATED-RELATED"/>
    <property type="match status" value="1"/>
</dbReference>
<dbReference type="Pfam" id="PF07691">
    <property type="entry name" value="PA14"/>
    <property type="match status" value="1"/>
</dbReference>
<dbReference type="PROSITE" id="PS51820">
    <property type="entry name" value="PA14"/>
    <property type="match status" value="1"/>
</dbReference>
<organism>
    <name type="scientific">Dictyostelium discoideum</name>
    <name type="common">Social amoeba</name>
    <dbReference type="NCBI Taxonomy" id="44689"/>
    <lineage>
        <taxon>Eukaryota</taxon>
        <taxon>Amoebozoa</taxon>
        <taxon>Evosea</taxon>
        <taxon>Eumycetozoa</taxon>
        <taxon>Dictyostelia</taxon>
        <taxon>Dictyosteliales</taxon>
        <taxon>Dictyosteliaceae</taxon>
        <taxon>Dictyostelium</taxon>
    </lineage>
</organism>
<sequence length="750" mass="81772">MKEKIKLSLLILTSIILAVANSQTQPKTLAMTATVYDQHTFYNDNFENQGPAYLTKNMVVSKLDKTLKIPQLVSLDINVEGKTGVNYFGTMYNPKLFKYFFSENTNASPDDKNSGKNFPLLMDLILTLNETSGAYEFSKQEYFPINGKGFNDPSYKVPPKYKADSPNVDWFKMAGGGYSQNNYNYCIKLNSKFTYFNKGEVFNFRGDDDVWVFIDNRLVVDLGGLHTAETANIKLKDITNPPLQTNKIYDLDFFYCERRATGSSIQLSTTLEIFCVDDYCGVCNGDGTSCCTSSTCEDNNACTIDKCPKLGSVAPGKFTKDDCVYSEVVCPIESNQCLRPYCDPKEGCKTSPVECVNGNIDKCFEQFGSCDSSLGCQYNYKCNAYGKCNLGCSGGQCKVKTSEQCSEEFGNDPCYTYSCDVELGCVRTEKCSQEDAKLCTINTCLKNVTREDDRCELVSIQEECNCCAGHTVDPCQLPGCGEPGECKPVDKIIDDNNLCTIDKCENGTITHTPVKCGGCSICDSKTGQCVINPPICDDDNVCTIDTCSLVENPNGSIDGVCSNKIFDCASNDTDLCNIWTCDANNGGCQSIKKVCDDPSPCLVSKCEPSTGQCVDSPRTCDHGGAFCLISECDERLGCIVYNRQCASDNRKCQAGVCVNGTSSEEGHCTSVDYDPLPFGCNTAAVVSTAVIAGVTVAAVVGLGIFLYGGKKGYDYYQDNKSKGMTGANSNPLYKESGNAGQNPLYNDNNL</sequence>
<feature type="signal peptide" evidence="1">
    <location>
        <begin position="1"/>
        <end position="22"/>
    </location>
</feature>
<feature type="chain" id="PRO_0000327555" description="Protein psiO">
    <location>
        <begin position="23"/>
        <end position="750"/>
    </location>
</feature>
<feature type="topological domain" description="Extracellular" evidence="1">
    <location>
        <begin position="23"/>
        <end position="688"/>
    </location>
</feature>
<feature type="transmembrane region" description="Helical" evidence="1">
    <location>
        <begin position="689"/>
        <end position="709"/>
    </location>
</feature>
<feature type="topological domain" description="Cytoplasmic" evidence="1">
    <location>
        <begin position="710"/>
        <end position="750"/>
    </location>
</feature>
<feature type="domain" description="PA14" evidence="2">
    <location>
        <begin position="140"/>
        <end position="286"/>
    </location>
</feature>
<feature type="region of interest" description="Disordered" evidence="3">
    <location>
        <begin position="727"/>
        <end position="750"/>
    </location>
</feature>
<feature type="compositionally biased region" description="Polar residues" evidence="3">
    <location>
        <begin position="738"/>
        <end position="750"/>
    </location>
</feature>
<feature type="glycosylation site" description="N-linked (GlcNAc...) asparagine" evidence="1">
    <location>
        <position position="129"/>
    </location>
</feature>
<feature type="glycosylation site" description="N-linked (GlcNAc...) asparagine" evidence="1">
    <location>
        <position position="447"/>
    </location>
</feature>
<feature type="glycosylation site" description="N-linked (GlcNAc...) asparagine" evidence="1">
    <location>
        <position position="506"/>
    </location>
</feature>
<feature type="glycosylation site" description="N-linked (GlcNAc...) asparagine" evidence="1">
    <location>
        <position position="554"/>
    </location>
</feature>
<feature type="glycosylation site" description="N-linked (GlcNAc...) asparagine" evidence="1">
    <location>
        <position position="571"/>
    </location>
</feature>
<feature type="glycosylation site" description="N-linked (GlcNAc...) asparagine" evidence="1">
    <location>
        <position position="659"/>
    </location>
</feature>
<gene>
    <name type="primary">psiO</name>
    <name type="ORF">DDB_G0280167</name>
</gene>
<evidence type="ECO:0000255" key="1"/>
<evidence type="ECO:0000255" key="2">
    <source>
        <dbReference type="PROSITE-ProRule" id="PRU01164"/>
    </source>
</evidence>
<evidence type="ECO:0000256" key="3">
    <source>
        <dbReference type="SAM" id="MobiDB-lite"/>
    </source>
</evidence>
<evidence type="ECO:0000305" key="4"/>
<keyword id="KW-0325">Glycoprotein</keyword>
<keyword id="KW-0472">Membrane</keyword>
<keyword id="KW-1185">Reference proteome</keyword>
<keyword id="KW-0732">Signal</keyword>
<keyword id="KW-0812">Transmembrane</keyword>
<keyword id="KW-1133">Transmembrane helix</keyword>
<comment type="subcellular location">
    <subcellularLocation>
        <location evidence="4">Membrane</location>
        <topology evidence="4">Single-pass type I membrane protein</topology>
    </subcellularLocation>
</comment>
<comment type="similarity">
    <text evidence="4">Belongs to the prespore-cell-inducing factor family.</text>
</comment>
<proteinExistence type="inferred from homology"/>